<evidence type="ECO:0000250" key="1"/>
<evidence type="ECO:0000250" key="2">
    <source>
        <dbReference type="UniProtKB" id="Q5HFT0"/>
    </source>
</evidence>
<evidence type="ECO:0000250" key="3">
    <source>
        <dbReference type="UniProtKB" id="Q9L524"/>
    </source>
</evidence>
<evidence type="ECO:0000255" key="4">
    <source>
        <dbReference type="PROSITE-ProRule" id="PRU00169"/>
    </source>
</evidence>
<evidence type="ECO:0000255" key="5">
    <source>
        <dbReference type="PROSITE-ProRule" id="PRU01091"/>
    </source>
</evidence>
<sequence>MSNEILIVDDEDRIRRLLKMYLERESFEIHEASNGQEAYELAMENNYACILLDLMLPEMDGIQVATKLREHKQTPIIMLTAKGEETNRVEGFESGADDYIVKPFSPREVVLRVKALLRRTQSTTVEQSEPHARDVIEFKHLEIDNDAHRVLADNQEVNLTPKEYELLIYLAKTPNKVFDREQLLKEVWHYEFYGDLRTVDTHVKRLREKLNRVSSEAAHMIQTVWGVGYKFEVKSNDEPAK</sequence>
<feature type="chain" id="PRO_0000290071" description="Transcriptional regulatory protein SrrA">
    <location>
        <begin position="1"/>
        <end position="241"/>
    </location>
</feature>
<feature type="domain" description="Response regulatory" evidence="4">
    <location>
        <begin position="4"/>
        <end position="117"/>
    </location>
</feature>
<feature type="DNA-binding region" description="OmpR/PhoB-type" evidence="5">
    <location>
        <begin position="133"/>
        <end position="233"/>
    </location>
</feature>
<feature type="modified residue" description="4-aspartylphosphate" evidence="4">
    <location>
        <position position="53"/>
    </location>
</feature>
<protein>
    <recommendedName>
        <fullName>Transcriptional regulatory protein SrrA</fullName>
    </recommendedName>
    <alternativeName>
        <fullName>Staphylococcal respiratory response protein A</fullName>
    </alternativeName>
</protein>
<gene>
    <name type="primary">srrA</name>
    <name type="ordered locus">SAOUHSC_01586</name>
</gene>
<proteinExistence type="inferred from homology"/>
<keyword id="KW-0010">Activator</keyword>
<keyword id="KW-0963">Cytoplasm</keyword>
<keyword id="KW-0238">DNA-binding</keyword>
<keyword id="KW-0597">Phosphoprotein</keyword>
<keyword id="KW-1185">Reference proteome</keyword>
<keyword id="KW-0678">Repressor</keyword>
<keyword id="KW-0804">Transcription</keyword>
<keyword id="KW-0805">Transcription regulation</keyword>
<keyword id="KW-0902">Two-component regulatory system</keyword>
<comment type="function">
    <text evidence="2 3">Member of the two-component regulatory system SrrA/SrrB, which is involved in the global regulation of staphylococcal virulence factors in response to environmental oxygen levels as well as biofilm formation. Also plays an essential role in host-derived nitric oxide resistance by regulating hmp/flavohemoglobin, an enzyme that detoxifies nitric oxide by converting it to nitrate (By similarity). Functions as a transcription regulator by direct binding to promoter regions of target genes (By similarity).</text>
</comment>
<comment type="subcellular location">
    <subcellularLocation>
        <location evidence="1">Cytoplasm</location>
    </subcellularLocation>
</comment>
<comment type="PTM">
    <text evidence="1">Phosphorylated by SrrB.</text>
</comment>
<organism>
    <name type="scientific">Staphylococcus aureus (strain NCTC 8325 / PS 47)</name>
    <dbReference type="NCBI Taxonomy" id="93061"/>
    <lineage>
        <taxon>Bacteria</taxon>
        <taxon>Bacillati</taxon>
        <taxon>Bacillota</taxon>
        <taxon>Bacilli</taxon>
        <taxon>Bacillales</taxon>
        <taxon>Staphylococcaceae</taxon>
        <taxon>Staphylococcus</taxon>
    </lineage>
</organism>
<name>SRRA_STAA8</name>
<accession>Q2FY79</accession>
<dbReference type="EMBL" id="AY197750">
    <property type="protein sequence ID" value="AAP35031.1"/>
    <property type="molecule type" value="Genomic_DNA"/>
</dbReference>
<dbReference type="EMBL" id="CP000253">
    <property type="protein sequence ID" value="ABD30665.1"/>
    <property type="molecule type" value="Genomic_DNA"/>
</dbReference>
<dbReference type="RefSeq" id="WP_000064078.1">
    <property type="nucleotide sequence ID" value="NZ_LS483365.1"/>
</dbReference>
<dbReference type="RefSeq" id="YP_500101.1">
    <property type="nucleotide sequence ID" value="NC_007795.1"/>
</dbReference>
<dbReference type="SMR" id="Q2FY79"/>
<dbReference type="STRING" id="93061.SAOUHSC_01586"/>
<dbReference type="PaxDb" id="1280-SAXN108_1515"/>
<dbReference type="GeneID" id="3920002"/>
<dbReference type="GeneID" id="98345856"/>
<dbReference type="KEGG" id="sao:SAOUHSC_01586"/>
<dbReference type="PATRIC" id="fig|93061.5.peg.1443"/>
<dbReference type="eggNOG" id="COG0745">
    <property type="taxonomic scope" value="Bacteria"/>
</dbReference>
<dbReference type="HOGENOM" id="CLU_000445_30_4_9"/>
<dbReference type="OrthoDB" id="9790442at2"/>
<dbReference type="PRO" id="PR:Q2FY79"/>
<dbReference type="Proteomes" id="UP000008816">
    <property type="component" value="Chromosome"/>
</dbReference>
<dbReference type="GO" id="GO:0005829">
    <property type="term" value="C:cytosol"/>
    <property type="evidence" value="ECO:0000318"/>
    <property type="project" value="GO_Central"/>
</dbReference>
<dbReference type="GO" id="GO:0032993">
    <property type="term" value="C:protein-DNA complex"/>
    <property type="evidence" value="ECO:0000318"/>
    <property type="project" value="GO_Central"/>
</dbReference>
<dbReference type="GO" id="GO:0000156">
    <property type="term" value="F:phosphorelay response regulator activity"/>
    <property type="evidence" value="ECO:0000318"/>
    <property type="project" value="GO_Central"/>
</dbReference>
<dbReference type="GO" id="GO:0000976">
    <property type="term" value="F:transcription cis-regulatory region binding"/>
    <property type="evidence" value="ECO:0000318"/>
    <property type="project" value="GO_Central"/>
</dbReference>
<dbReference type="GO" id="GO:0006355">
    <property type="term" value="P:regulation of DNA-templated transcription"/>
    <property type="evidence" value="ECO:0000318"/>
    <property type="project" value="GO_Central"/>
</dbReference>
<dbReference type="CDD" id="cd17574">
    <property type="entry name" value="REC_OmpR"/>
    <property type="match status" value="1"/>
</dbReference>
<dbReference type="CDD" id="cd00383">
    <property type="entry name" value="trans_reg_C"/>
    <property type="match status" value="1"/>
</dbReference>
<dbReference type="FunFam" id="3.40.50.2300:FF:000001">
    <property type="entry name" value="DNA-binding response regulator PhoB"/>
    <property type="match status" value="1"/>
</dbReference>
<dbReference type="FunFam" id="1.10.10.10:FF:000018">
    <property type="entry name" value="DNA-binding response regulator ResD"/>
    <property type="match status" value="1"/>
</dbReference>
<dbReference type="Gene3D" id="3.40.50.2300">
    <property type="match status" value="1"/>
</dbReference>
<dbReference type="Gene3D" id="6.10.250.690">
    <property type="match status" value="1"/>
</dbReference>
<dbReference type="Gene3D" id="1.10.10.10">
    <property type="entry name" value="Winged helix-like DNA-binding domain superfamily/Winged helix DNA-binding domain"/>
    <property type="match status" value="1"/>
</dbReference>
<dbReference type="InterPro" id="IPR011006">
    <property type="entry name" value="CheY-like_superfamily"/>
</dbReference>
<dbReference type="InterPro" id="IPR001867">
    <property type="entry name" value="OmpR/PhoB-type_DNA-bd"/>
</dbReference>
<dbReference type="InterPro" id="IPR001789">
    <property type="entry name" value="Sig_transdc_resp-reg_receiver"/>
</dbReference>
<dbReference type="InterPro" id="IPR039420">
    <property type="entry name" value="WalR-like"/>
</dbReference>
<dbReference type="InterPro" id="IPR036388">
    <property type="entry name" value="WH-like_DNA-bd_sf"/>
</dbReference>
<dbReference type="PANTHER" id="PTHR48111">
    <property type="entry name" value="REGULATOR OF RPOS"/>
    <property type="match status" value="1"/>
</dbReference>
<dbReference type="PANTHER" id="PTHR48111:SF44">
    <property type="entry name" value="TRANSCRIPTIONAL REGULATORY PROTEIN RESD"/>
    <property type="match status" value="1"/>
</dbReference>
<dbReference type="Pfam" id="PF00072">
    <property type="entry name" value="Response_reg"/>
    <property type="match status" value="1"/>
</dbReference>
<dbReference type="Pfam" id="PF00486">
    <property type="entry name" value="Trans_reg_C"/>
    <property type="match status" value="1"/>
</dbReference>
<dbReference type="SMART" id="SM00448">
    <property type="entry name" value="REC"/>
    <property type="match status" value="1"/>
</dbReference>
<dbReference type="SMART" id="SM00862">
    <property type="entry name" value="Trans_reg_C"/>
    <property type="match status" value="1"/>
</dbReference>
<dbReference type="SUPFAM" id="SSF52172">
    <property type="entry name" value="CheY-like"/>
    <property type="match status" value="1"/>
</dbReference>
<dbReference type="PROSITE" id="PS51755">
    <property type="entry name" value="OMPR_PHOB"/>
    <property type="match status" value="1"/>
</dbReference>
<dbReference type="PROSITE" id="PS50110">
    <property type="entry name" value="RESPONSE_REGULATORY"/>
    <property type="match status" value="1"/>
</dbReference>
<reference key="1">
    <citation type="submission" date="2002-12" db="EMBL/GenBank/DDBJ databases">
        <title>Role of oxygen sensor srrAB in Staphylococcus aureus biofilm formation.</title>
        <authorList>
            <person name="Cramton S.E."/>
            <person name="Doering G."/>
        </authorList>
    </citation>
    <scope>NUCLEOTIDE SEQUENCE [GENOMIC DNA]</scope>
</reference>
<reference key="2">
    <citation type="book" date="2006" name="Gram positive pathogens, 2nd edition">
        <title>The Staphylococcus aureus NCTC 8325 genome.</title>
        <editorList>
            <person name="Fischetti V."/>
            <person name="Novick R."/>
            <person name="Ferretti J."/>
            <person name="Portnoy D."/>
            <person name="Rood J."/>
        </editorList>
        <authorList>
            <person name="Gillaspy A.F."/>
            <person name="Worrell V."/>
            <person name="Orvis J."/>
            <person name="Roe B.A."/>
            <person name="Dyer D.W."/>
            <person name="Iandolo J.J."/>
        </authorList>
    </citation>
    <scope>NUCLEOTIDE SEQUENCE [LARGE SCALE GENOMIC DNA]</scope>
    <source>
        <strain>NCTC 8325 / PS 47</strain>
    </source>
</reference>